<dbReference type="EC" id="3.1.5.1" evidence="1"/>
<dbReference type="EMBL" id="CP000036">
    <property type="protein sequence ID" value="ABB64879.1"/>
    <property type="molecule type" value="Genomic_DNA"/>
</dbReference>
<dbReference type="RefSeq" id="WP_000057109.1">
    <property type="nucleotide sequence ID" value="NC_007613.1"/>
</dbReference>
<dbReference type="SMR" id="Q325X9"/>
<dbReference type="KEGG" id="sbo:SBO_0149"/>
<dbReference type="HOGENOM" id="CLU_028163_2_1_6"/>
<dbReference type="Proteomes" id="UP000007067">
    <property type="component" value="Chromosome"/>
</dbReference>
<dbReference type="GO" id="GO:0008832">
    <property type="term" value="F:dGTPase activity"/>
    <property type="evidence" value="ECO:0007669"/>
    <property type="project" value="UniProtKB-UniRule"/>
</dbReference>
<dbReference type="GO" id="GO:0000287">
    <property type="term" value="F:magnesium ion binding"/>
    <property type="evidence" value="ECO:0007669"/>
    <property type="project" value="UniProtKB-UniRule"/>
</dbReference>
<dbReference type="GO" id="GO:0006203">
    <property type="term" value="P:dGTP catabolic process"/>
    <property type="evidence" value="ECO:0007669"/>
    <property type="project" value="InterPro"/>
</dbReference>
<dbReference type="CDD" id="cd00077">
    <property type="entry name" value="HDc"/>
    <property type="match status" value="1"/>
</dbReference>
<dbReference type="FunFam" id="1.10.3210.10:FF:000009">
    <property type="entry name" value="Deoxyguanosinetriphosphate triphosphohydrolase"/>
    <property type="match status" value="1"/>
</dbReference>
<dbReference type="FunFam" id="1.10.3210.10:FF:000010">
    <property type="entry name" value="Deoxyguanosinetriphosphate triphosphohydrolase"/>
    <property type="match status" value="1"/>
</dbReference>
<dbReference type="FunFam" id="1.10.3410.10:FF:000001">
    <property type="entry name" value="Deoxyguanosinetriphosphate triphosphohydrolase"/>
    <property type="match status" value="1"/>
</dbReference>
<dbReference type="Gene3D" id="1.10.3210.10">
    <property type="entry name" value="Hypothetical protein af1432"/>
    <property type="match status" value="2"/>
</dbReference>
<dbReference type="Gene3D" id="1.10.3410.10">
    <property type="entry name" value="putative deoxyguanosinetriphosphate triphosphohydrolase like domain"/>
    <property type="match status" value="1"/>
</dbReference>
<dbReference type="HAMAP" id="MF_00030">
    <property type="entry name" value="dGTPase_type1"/>
    <property type="match status" value="1"/>
</dbReference>
<dbReference type="InterPro" id="IPR023293">
    <property type="entry name" value="dGTP_triP_hydro_central_sf"/>
</dbReference>
<dbReference type="InterPro" id="IPR006261">
    <property type="entry name" value="dGTPase"/>
</dbReference>
<dbReference type="InterPro" id="IPR050135">
    <property type="entry name" value="dGTPase-like"/>
</dbReference>
<dbReference type="InterPro" id="IPR020779">
    <property type="entry name" value="dNTPase_1"/>
</dbReference>
<dbReference type="InterPro" id="IPR003607">
    <property type="entry name" value="HD/PDEase_dom"/>
</dbReference>
<dbReference type="InterPro" id="IPR006674">
    <property type="entry name" value="HD_domain"/>
</dbReference>
<dbReference type="NCBIfam" id="TIGR01353">
    <property type="entry name" value="dGTP_triPase"/>
    <property type="match status" value="1"/>
</dbReference>
<dbReference type="NCBIfam" id="NF003429">
    <property type="entry name" value="PRK04926.1"/>
    <property type="match status" value="1"/>
</dbReference>
<dbReference type="PANTHER" id="PTHR11373:SF32">
    <property type="entry name" value="DEOXYGUANOSINETRIPHOSPHATE TRIPHOSPHOHYDROLASE"/>
    <property type="match status" value="1"/>
</dbReference>
<dbReference type="PANTHER" id="PTHR11373">
    <property type="entry name" value="DEOXYNUCLEOSIDE TRIPHOSPHATE TRIPHOSPHOHYDROLASE"/>
    <property type="match status" value="1"/>
</dbReference>
<dbReference type="Pfam" id="PF01966">
    <property type="entry name" value="HD"/>
    <property type="match status" value="1"/>
</dbReference>
<dbReference type="SMART" id="SM00471">
    <property type="entry name" value="HDc"/>
    <property type="match status" value="1"/>
</dbReference>
<dbReference type="SUPFAM" id="SSF109604">
    <property type="entry name" value="HD-domain/PDEase-like"/>
    <property type="match status" value="1"/>
</dbReference>
<dbReference type="PROSITE" id="PS51831">
    <property type="entry name" value="HD"/>
    <property type="match status" value="1"/>
</dbReference>
<evidence type="ECO:0000255" key="1">
    <source>
        <dbReference type="HAMAP-Rule" id="MF_00030"/>
    </source>
</evidence>
<evidence type="ECO:0000255" key="2">
    <source>
        <dbReference type="PROSITE-ProRule" id="PRU01175"/>
    </source>
</evidence>
<sequence>MAQIDFRKKINWHRRYRSPQGVKTEHEILRIFESDRGRIINSPAIRRLQQKTQVFPLERNAAVRTRLTHSMEVQQVGRYIAKEILSRMKELKLLEAYGLDELTGPFESIVEMSCLMHDIGNPPFGHFGEAAINDWFRQRLHPEDAESQPLTDDRCSVAALRLRDGEEPLNELRRKIRQDLCHFEGNAQGIRLVHTLMRMNLTWAQVGGILKYTRPAWWRGETPETHHYLMKKPGYYLSEEAYIARLRKELNLALYSRFPLTWIMEAADDISYCVADLEDAVEKRIFTVEQLYHHLHEAWGQHEKGSLFSLVVENAWEKSRSNSLSRSTEDQFFMYLRVNTLNKLVPYAAQRFIDNLPAIFAGTFNHALLEDASECSDLLKLYKNVAVKHVFSHPDVEQLELQGYRVISGLLEIYRPLLSLSLSDFTELVEKERVKRFPIESRLFHKLSTRHRLAYVEAVSKLPSDSPEFPLWEYYYRCRLLQDYISGMTDLYAWDEYRRLMAVEQ</sequence>
<proteinExistence type="inferred from homology"/>
<keyword id="KW-0378">Hydrolase</keyword>
<keyword id="KW-0460">Magnesium</keyword>
<protein>
    <recommendedName>
        <fullName evidence="1">Deoxyguanosinetriphosphate triphosphohydrolase</fullName>
        <shortName evidence="1">dGTP triphosphohydrolase</shortName>
        <shortName evidence="1">dGTPase</shortName>
        <ecNumber evidence="1">3.1.5.1</ecNumber>
    </recommendedName>
</protein>
<name>DGTP_SHIBS</name>
<comment type="function">
    <text evidence="1">dGTPase preferentially hydrolyzes dGTP over the other canonical NTPs.</text>
</comment>
<comment type="catalytic activity">
    <reaction evidence="1">
        <text>dGTP + H2O = 2'-deoxyguanosine + triphosphate + H(+)</text>
        <dbReference type="Rhea" id="RHEA:15193"/>
        <dbReference type="ChEBI" id="CHEBI:15377"/>
        <dbReference type="ChEBI" id="CHEBI:15378"/>
        <dbReference type="ChEBI" id="CHEBI:17172"/>
        <dbReference type="ChEBI" id="CHEBI:18036"/>
        <dbReference type="ChEBI" id="CHEBI:61429"/>
        <dbReference type="EC" id="3.1.5.1"/>
    </reaction>
</comment>
<comment type="cofactor">
    <cofactor evidence="1">
        <name>Mg(2+)</name>
        <dbReference type="ChEBI" id="CHEBI:18420"/>
    </cofactor>
</comment>
<comment type="subunit">
    <text evidence="1">Homotetramer.</text>
</comment>
<comment type="similarity">
    <text evidence="1">Belongs to the dGTPase family. Type 1 subfamily.</text>
</comment>
<accession>Q325X9</accession>
<reference key="1">
    <citation type="journal article" date="2005" name="Nucleic Acids Res.">
        <title>Genome dynamics and diversity of Shigella species, the etiologic agents of bacillary dysentery.</title>
        <authorList>
            <person name="Yang F."/>
            <person name="Yang J."/>
            <person name="Zhang X."/>
            <person name="Chen L."/>
            <person name="Jiang Y."/>
            <person name="Yan Y."/>
            <person name="Tang X."/>
            <person name="Wang J."/>
            <person name="Xiong Z."/>
            <person name="Dong J."/>
            <person name="Xue Y."/>
            <person name="Zhu Y."/>
            <person name="Xu X."/>
            <person name="Sun L."/>
            <person name="Chen S."/>
            <person name="Nie H."/>
            <person name="Peng J."/>
            <person name="Xu J."/>
            <person name="Wang Y."/>
            <person name="Yuan Z."/>
            <person name="Wen Y."/>
            <person name="Yao Z."/>
            <person name="Shen Y."/>
            <person name="Qiang B."/>
            <person name="Hou Y."/>
            <person name="Yu J."/>
            <person name="Jin Q."/>
        </authorList>
    </citation>
    <scope>NUCLEOTIDE SEQUENCE [LARGE SCALE GENOMIC DNA]</scope>
    <source>
        <strain>Sb227</strain>
    </source>
</reference>
<organism>
    <name type="scientific">Shigella boydii serotype 4 (strain Sb227)</name>
    <dbReference type="NCBI Taxonomy" id="300268"/>
    <lineage>
        <taxon>Bacteria</taxon>
        <taxon>Pseudomonadati</taxon>
        <taxon>Pseudomonadota</taxon>
        <taxon>Gammaproteobacteria</taxon>
        <taxon>Enterobacterales</taxon>
        <taxon>Enterobacteriaceae</taxon>
        <taxon>Shigella</taxon>
    </lineage>
</organism>
<feature type="chain" id="PRO_1000006552" description="Deoxyguanosinetriphosphate triphosphohydrolase">
    <location>
        <begin position="1"/>
        <end position="505"/>
    </location>
</feature>
<feature type="domain" description="HD" evidence="2">
    <location>
        <begin position="66"/>
        <end position="273"/>
    </location>
</feature>
<gene>
    <name evidence="1" type="primary">dgt</name>
    <name type="ordered locus">SBO_0149</name>
</gene>